<feature type="chain" id="PRO_0000159721" description="Uncharacterized solute-binding protein MMP1652">
    <location>
        <begin position="1"/>
        <end position="332"/>
    </location>
</feature>
<organism>
    <name type="scientific">Methanococcus maripaludis (strain DSM 14266 / JCM 13030 / NBRC 101832 / S2 / LL)</name>
    <dbReference type="NCBI Taxonomy" id="267377"/>
    <lineage>
        <taxon>Archaea</taxon>
        <taxon>Methanobacteriati</taxon>
        <taxon>Methanobacteriota</taxon>
        <taxon>Methanomada group</taxon>
        <taxon>Methanococci</taxon>
        <taxon>Methanococcales</taxon>
        <taxon>Methanococcaceae</taxon>
        <taxon>Methanococcus</taxon>
    </lineage>
</organism>
<accession>P61618</accession>
<sequence length="332" mass="36799">MILAFSGCVDQSASDSTSEDATPKVLKIFHAGSLAVPFGEYETLYENEYTNVDVQRESAGSVACVRKITELNKTAEILASADYTLIPSMMMPDYADWYVMVAKNEIVIAYTENSQYYDEITSDNWYEIFQRDGVKYGFSSPNDDPCGYRSQMVVQLAEEAYGDSTIYDNLMLGNTNFEVNENADGTYCIVSPESIDVNEAKVFMRSKEVDLLGPLETGAYDYLFIYKSVANQHGLSYIELPEDINLGDYQNADEYAKASIFLTGQNKTIVAKPIVYGMTVPSNAEDYEEGVNFVKTVLEHPEVFENAGQPVISPAIAVGDVPEEISDLVVMG</sequence>
<dbReference type="EMBL" id="BX950229">
    <property type="protein sequence ID" value="CAF31208.1"/>
    <property type="molecule type" value="Genomic_DNA"/>
</dbReference>
<dbReference type="SMR" id="P61618"/>
<dbReference type="STRING" id="267377.MMP1652"/>
<dbReference type="EnsemblBacteria" id="CAF31208">
    <property type="protein sequence ID" value="CAF31208"/>
    <property type="gene ID" value="MMP1652"/>
</dbReference>
<dbReference type="KEGG" id="mmp:MMP1652"/>
<dbReference type="PATRIC" id="fig|267377.15.peg.1691"/>
<dbReference type="eggNOG" id="arCOG00219">
    <property type="taxonomic scope" value="Archaea"/>
</dbReference>
<dbReference type="HOGENOM" id="CLU_055936_0_0_2"/>
<dbReference type="Proteomes" id="UP000000590">
    <property type="component" value="Chromosome"/>
</dbReference>
<dbReference type="GO" id="GO:0030973">
    <property type="term" value="F:molybdate ion binding"/>
    <property type="evidence" value="ECO:0007669"/>
    <property type="project" value="TreeGrafter"/>
</dbReference>
<dbReference type="GO" id="GO:1901359">
    <property type="term" value="F:tungstate binding"/>
    <property type="evidence" value="ECO:0007669"/>
    <property type="project" value="InterPro"/>
</dbReference>
<dbReference type="GO" id="GO:0015689">
    <property type="term" value="P:molybdate ion transport"/>
    <property type="evidence" value="ECO:0007669"/>
    <property type="project" value="TreeGrafter"/>
</dbReference>
<dbReference type="CDD" id="cd13540">
    <property type="entry name" value="PBP2_ModA_WtpA"/>
    <property type="match status" value="1"/>
</dbReference>
<dbReference type="Gene3D" id="3.40.190.10">
    <property type="entry name" value="Periplasmic binding protein-like II"/>
    <property type="match status" value="2"/>
</dbReference>
<dbReference type="InterPro" id="IPR022498">
    <property type="entry name" value="ABC_trnspt_W-bd_WtpA"/>
</dbReference>
<dbReference type="InterPro" id="IPR050682">
    <property type="entry name" value="ModA/WtpA"/>
</dbReference>
<dbReference type="NCBIfam" id="NF003196">
    <property type="entry name" value="PRK04168.1"/>
    <property type="match status" value="1"/>
</dbReference>
<dbReference type="NCBIfam" id="TIGR03730">
    <property type="entry name" value="tungstate_WtpA"/>
    <property type="match status" value="1"/>
</dbReference>
<dbReference type="PANTHER" id="PTHR30632">
    <property type="entry name" value="MOLYBDATE-BINDING PERIPLASMIC PROTEIN"/>
    <property type="match status" value="1"/>
</dbReference>
<dbReference type="PANTHER" id="PTHR30632:SF16">
    <property type="entry name" value="MOLYBDATE_TUNGSTATE-BINDING PROTEIN WTPA"/>
    <property type="match status" value="1"/>
</dbReference>
<dbReference type="Pfam" id="PF13531">
    <property type="entry name" value="SBP_bac_11"/>
    <property type="match status" value="1"/>
</dbReference>
<dbReference type="SUPFAM" id="SSF53850">
    <property type="entry name" value="Periplasmic binding protein-like II"/>
    <property type="match status" value="1"/>
</dbReference>
<comment type="similarity">
    <text evidence="1">Belongs to the bacterial solute-binding protein 1 family. WtpA subfamily.</text>
</comment>
<protein>
    <recommendedName>
        <fullName>Uncharacterized solute-binding protein MMP1652</fullName>
    </recommendedName>
</protein>
<proteinExistence type="inferred from homology"/>
<evidence type="ECO:0000305" key="1"/>
<gene>
    <name type="ordered locus">MMP1652</name>
</gene>
<reference key="1">
    <citation type="journal article" date="2004" name="J. Bacteriol.">
        <title>Complete genome sequence of the genetically tractable hydrogenotrophic methanogen Methanococcus maripaludis.</title>
        <authorList>
            <person name="Hendrickson E.L."/>
            <person name="Kaul R."/>
            <person name="Zhou Y."/>
            <person name="Bovee D."/>
            <person name="Chapman P."/>
            <person name="Chung J."/>
            <person name="Conway de Macario E."/>
            <person name="Dodsworth J.A."/>
            <person name="Gillett W."/>
            <person name="Graham D.E."/>
            <person name="Hackett M."/>
            <person name="Haydock A.K."/>
            <person name="Kang A."/>
            <person name="Land M.L."/>
            <person name="Levy R."/>
            <person name="Lie T.J."/>
            <person name="Major T.A."/>
            <person name="Moore B.C."/>
            <person name="Porat I."/>
            <person name="Palmeiri A."/>
            <person name="Rouse G."/>
            <person name="Saenphimmachak C."/>
            <person name="Soell D."/>
            <person name="Van Dien S."/>
            <person name="Wang T."/>
            <person name="Whitman W.B."/>
            <person name="Xia Q."/>
            <person name="Zhang Y."/>
            <person name="Larimer F.W."/>
            <person name="Olson M.V."/>
            <person name="Leigh J.A."/>
        </authorList>
    </citation>
    <scope>NUCLEOTIDE SEQUENCE [LARGE SCALE GENOMIC DNA]</scope>
    <source>
        <strain>DSM 14266 / JCM 13030 / NBRC 101832 / S2 / LL</strain>
    </source>
</reference>
<name>Y1652_METMP</name>
<keyword id="KW-1185">Reference proteome</keyword>